<comment type="function">
    <text evidence="1">Protein S19 forms a complex with S13 that binds strongly to the 16S ribosomal RNA.</text>
</comment>
<comment type="similarity">
    <text evidence="1">Belongs to the universal ribosomal protein uS19 family.</text>
</comment>
<sequence>MTRSIKKGPFVDAHLQKKVDEQNEKGTHNVIKTWSRRSMITPDFIGHTFAVHDGRKHVPVFVTESMVGHKLGEFAPTKTFKGHVKDDKKARR</sequence>
<feature type="chain" id="PRO_1000051015" description="Small ribosomal subunit protein uS19">
    <location>
        <begin position="1"/>
        <end position="92"/>
    </location>
</feature>
<keyword id="KW-1185">Reference proteome</keyword>
<keyword id="KW-0687">Ribonucleoprotein</keyword>
<keyword id="KW-0689">Ribosomal protein</keyword>
<keyword id="KW-0694">RNA-binding</keyword>
<keyword id="KW-0699">rRNA-binding</keyword>
<organism>
    <name type="scientific">Bifidobacterium adolescentis (strain ATCC 15703 / DSM 20083 / NCTC 11814 / E194a)</name>
    <dbReference type="NCBI Taxonomy" id="367928"/>
    <lineage>
        <taxon>Bacteria</taxon>
        <taxon>Bacillati</taxon>
        <taxon>Actinomycetota</taxon>
        <taxon>Actinomycetes</taxon>
        <taxon>Bifidobacteriales</taxon>
        <taxon>Bifidobacteriaceae</taxon>
        <taxon>Bifidobacterium</taxon>
    </lineage>
</organism>
<proteinExistence type="inferred from homology"/>
<evidence type="ECO:0000255" key="1">
    <source>
        <dbReference type="HAMAP-Rule" id="MF_00531"/>
    </source>
</evidence>
<evidence type="ECO:0000305" key="2"/>
<dbReference type="EMBL" id="AP009256">
    <property type="protein sequence ID" value="BAF39106.1"/>
    <property type="molecule type" value="Genomic_DNA"/>
</dbReference>
<dbReference type="RefSeq" id="WP_003808025.1">
    <property type="nucleotide sequence ID" value="NZ_CAXVNC010000001.1"/>
</dbReference>
<dbReference type="SMR" id="A1A073"/>
<dbReference type="STRING" id="367928.BAD_0325"/>
<dbReference type="PaxDb" id="1680-BADO_0332"/>
<dbReference type="GeneID" id="97501905"/>
<dbReference type="KEGG" id="bad:BAD_0325"/>
<dbReference type="HOGENOM" id="CLU_144911_0_1_11"/>
<dbReference type="Proteomes" id="UP000008702">
    <property type="component" value="Chromosome"/>
</dbReference>
<dbReference type="GO" id="GO:0005737">
    <property type="term" value="C:cytoplasm"/>
    <property type="evidence" value="ECO:0007669"/>
    <property type="project" value="UniProtKB-ARBA"/>
</dbReference>
<dbReference type="GO" id="GO:0015935">
    <property type="term" value="C:small ribosomal subunit"/>
    <property type="evidence" value="ECO:0007669"/>
    <property type="project" value="InterPro"/>
</dbReference>
<dbReference type="GO" id="GO:0019843">
    <property type="term" value="F:rRNA binding"/>
    <property type="evidence" value="ECO:0007669"/>
    <property type="project" value="UniProtKB-UniRule"/>
</dbReference>
<dbReference type="GO" id="GO:0003735">
    <property type="term" value="F:structural constituent of ribosome"/>
    <property type="evidence" value="ECO:0007669"/>
    <property type="project" value="InterPro"/>
</dbReference>
<dbReference type="GO" id="GO:0000028">
    <property type="term" value="P:ribosomal small subunit assembly"/>
    <property type="evidence" value="ECO:0007669"/>
    <property type="project" value="TreeGrafter"/>
</dbReference>
<dbReference type="GO" id="GO:0006412">
    <property type="term" value="P:translation"/>
    <property type="evidence" value="ECO:0007669"/>
    <property type="project" value="UniProtKB-UniRule"/>
</dbReference>
<dbReference type="FunFam" id="3.30.860.10:FF:000001">
    <property type="entry name" value="30S ribosomal protein S19"/>
    <property type="match status" value="1"/>
</dbReference>
<dbReference type="Gene3D" id="3.30.860.10">
    <property type="entry name" value="30s Ribosomal Protein S19, Chain A"/>
    <property type="match status" value="1"/>
</dbReference>
<dbReference type="HAMAP" id="MF_00531">
    <property type="entry name" value="Ribosomal_uS19"/>
    <property type="match status" value="1"/>
</dbReference>
<dbReference type="InterPro" id="IPR002222">
    <property type="entry name" value="Ribosomal_uS19"/>
</dbReference>
<dbReference type="InterPro" id="IPR005732">
    <property type="entry name" value="Ribosomal_uS19_bac-type"/>
</dbReference>
<dbReference type="InterPro" id="IPR020934">
    <property type="entry name" value="Ribosomal_uS19_CS"/>
</dbReference>
<dbReference type="InterPro" id="IPR023575">
    <property type="entry name" value="Ribosomal_uS19_SF"/>
</dbReference>
<dbReference type="NCBIfam" id="TIGR01050">
    <property type="entry name" value="rpsS_bact"/>
    <property type="match status" value="1"/>
</dbReference>
<dbReference type="PANTHER" id="PTHR11880">
    <property type="entry name" value="RIBOSOMAL PROTEIN S19P FAMILY MEMBER"/>
    <property type="match status" value="1"/>
</dbReference>
<dbReference type="PANTHER" id="PTHR11880:SF8">
    <property type="entry name" value="SMALL RIBOSOMAL SUBUNIT PROTEIN US19M"/>
    <property type="match status" value="1"/>
</dbReference>
<dbReference type="Pfam" id="PF00203">
    <property type="entry name" value="Ribosomal_S19"/>
    <property type="match status" value="1"/>
</dbReference>
<dbReference type="PIRSF" id="PIRSF002144">
    <property type="entry name" value="Ribosomal_S19"/>
    <property type="match status" value="1"/>
</dbReference>
<dbReference type="PRINTS" id="PR00975">
    <property type="entry name" value="RIBOSOMALS19"/>
</dbReference>
<dbReference type="SUPFAM" id="SSF54570">
    <property type="entry name" value="Ribosomal protein S19"/>
    <property type="match status" value="1"/>
</dbReference>
<dbReference type="PROSITE" id="PS00323">
    <property type="entry name" value="RIBOSOMAL_S19"/>
    <property type="match status" value="1"/>
</dbReference>
<gene>
    <name evidence="1" type="primary">rpsS</name>
    <name type="ordered locus">BAD_0325</name>
</gene>
<protein>
    <recommendedName>
        <fullName evidence="1">Small ribosomal subunit protein uS19</fullName>
    </recommendedName>
    <alternativeName>
        <fullName evidence="2">30S ribosomal protein S19</fullName>
    </alternativeName>
</protein>
<name>RS19_BIFAA</name>
<reference key="1">
    <citation type="submission" date="2006-12" db="EMBL/GenBank/DDBJ databases">
        <title>Bifidobacterium adolescentis complete genome sequence.</title>
        <authorList>
            <person name="Suzuki T."/>
            <person name="Tsuda Y."/>
            <person name="Kanou N."/>
            <person name="Inoue T."/>
            <person name="Kumazaki K."/>
            <person name="Nagano S."/>
            <person name="Hirai S."/>
            <person name="Tanaka K."/>
            <person name="Watanabe K."/>
        </authorList>
    </citation>
    <scope>NUCLEOTIDE SEQUENCE [LARGE SCALE GENOMIC DNA]</scope>
    <source>
        <strain>ATCC 15703 / DSM 20083 / NCTC 11814 / E194a</strain>
    </source>
</reference>
<accession>A1A073</accession>